<name>PURA_CITBB</name>
<organism>
    <name type="scientific">Citrifermentans bemidjiense (strain ATCC BAA-1014 / DSM 16622 / JCM 12645 / Bem)</name>
    <name type="common">Geobacter bemidjiensis</name>
    <dbReference type="NCBI Taxonomy" id="404380"/>
    <lineage>
        <taxon>Bacteria</taxon>
        <taxon>Pseudomonadati</taxon>
        <taxon>Thermodesulfobacteriota</taxon>
        <taxon>Desulfuromonadia</taxon>
        <taxon>Geobacterales</taxon>
        <taxon>Geobacteraceae</taxon>
        <taxon>Citrifermentans</taxon>
    </lineage>
</organism>
<feature type="chain" id="PRO_1000089297" description="Adenylosuccinate synthetase">
    <location>
        <begin position="1"/>
        <end position="432"/>
    </location>
</feature>
<feature type="active site" description="Proton acceptor" evidence="1">
    <location>
        <position position="13"/>
    </location>
</feature>
<feature type="active site" description="Proton donor" evidence="1">
    <location>
        <position position="41"/>
    </location>
</feature>
<feature type="binding site" evidence="1">
    <location>
        <begin position="12"/>
        <end position="18"/>
    </location>
    <ligand>
        <name>GTP</name>
        <dbReference type="ChEBI" id="CHEBI:37565"/>
    </ligand>
</feature>
<feature type="binding site" description="in other chain" evidence="1">
    <location>
        <begin position="13"/>
        <end position="16"/>
    </location>
    <ligand>
        <name>IMP</name>
        <dbReference type="ChEBI" id="CHEBI:58053"/>
        <note>ligand shared between dimeric partners</note>
    </ligand>
</feature>
<feature type="binding site" evidence="1">
    <location>
        <position position="13"/>
    </location>
    <ligand>
        <name>Mg(2+)</name>
        <dbReference type="ChEBI" id="CHEBI:18420"/>
    </ligand>
</feature>
<feature type="binding site" description="in other chain" evidence="1">
    <location>
        <begin position="38"/>
        <end position="41"/>
    </location>
    <ligand>
        <name>IMP</name>
        <dbReference type="ChEBI" id="CHEBI:58053"/>
        <note>ligand shared between dimeric partners</note>
    </ligand>
</feature>
<feature type="binding site" evidence="1">
    <location>
        <begin position="40"/>
        <end position="42"/>
    </location>
    <ligand>
        <name>GTP</name>
        <dbReference type="ChEBI" id="CHEBI:37565"/>
    </ligand>
</feature>
<feature type="binding site" evidence="1">
    <location>
        <position position="40"/>
    </location>
    <ligand>
        <name>Mg(2+)</name>
        <dbReference type="ChEBI" id="CHEBI:18420"/>
    </ligand>
</feature>
<feature type="binding site" description="in other chain" evidence="1">
    <location>
        <position position="130"/>
    </location>
    <ligand>
        <name>IMP</name>
        <dbReference type="ChEBI" id="CHEBI:58053"/>
        <note>ligand shared between dimeric partners</note>
    </ligand>
</feature>
<feature type="binding site" evidence="1">
    <location>
        <position position="144"/>
    </location>
    <ligand>
        <name>IMP</name>
        <dbReference type="ChEBI" id="CHEBI:58053"/>
        <note>ligand shared between dimeric partners</note>
    </ligand>
</feature>
<feature type="binding site" description="in other chain" evidence="1">
    <location>
        <position position="225"/>
    </location>
    <ligand>
        <name>IMP</name>
        <dbReference type="ChEBI" id="CHEBI:58053"/>
        <note>ligand shared between dimeric partners</note>
    </ligand>
</feature>
<feature type="binding site" description="in other chain" evidence="1">
    <location>
        <position position="240"/>
    </location>
    <ligand>
        <name>IMP</name>
        <dbReference type="ChEBI" id="CHEBI:58053"/>
        <note>ligand shared between dimeric partners</note>
    </ligand>
</feature>
<feature type="binding site" evidence="1">
    <location>
        <begin position="300"/>
        <end position="306"/>
    </location>
    <ligand>
        <name>substrate</name>
    </ligand>
</feature>
<feature type="binding site" description="in other chain" evidence="1">
    <location>
        <position position="304"/>
    </location>
    <ligand>
        <name>IMP</name>
        <dbReference type="ChEBI" id="CHEBI:58053"/>
        <note>ligand shared between dimeric partners</note>
    </ligand>
</feature>
<feature type="binding site" evidence="1">
    <location>
        <position position="306"/>
    </location>
    <ligand>
        <name>GTP</name>
        <dbReference type="ChEBI" id="CHEBI:37565"/>
    </ligand>
</feature>
<feature type="binding site" evidence="1">
    <location>
        <begin position="332"/>
        <end position="334"/>
    </location>
    <ligand>
        <name>GTP</name>
        <dbReference type="ChEBI" id="CHEBI:37565"/>
    </ligand>
</feature>
<feature type="binding site" evidence="1">
    <location>
        <begin position="414"/>
        <end position="416"/>
    </location>
    <ligand>
        <name>GTP</name>
        <dbReference type="ChEBI" id="CHEBI:37565"/>
    </ligand>
</feature>
<reference key="1">
    <citation type="submission" date="2008-07" db="EMBL/GenBank/DDBJ databases">
        <title>Complete sequence of Geobacter bemidjiensis BEM.</title>
        <authorList>
            <consortium name="US DOE Joint Genome Institute"/>
            <person name="Lucas S."/>
            <person name="Copeland A."/>
            <person name="Lapidus A."/>
            <person name="Glavina del Rio T."/>
            <person name="Dalin E."/>
            <person name="Tice H."/>
            <person name="Bruce D."/>
            <person name="Goodwin L."/>
            <person name="Pitluck S."/>
            <person name="Kiss H."/>
            <person name="Brettin T."/>
            <person name="Detter J.C."/>
            <person name="Han C."/>
            <person name="Kuske C.R."/>
            <person name="Schmutz J."/>
            <person name="Larimer F."/>
            <person name="Land M."/>
            <person name="Hauser L."/>
            <person name="Kyrpides N."/>
            <person name="Lykidis A."/>
            <person name="Lovley D."/>
            <person name="Richardson P."/>
        </authorList>
    </citation>
    <scope>NUCLEOTIDE SEQUENCE [LARGE SCALE GENOMIC DNA]</scope>
    <source>
        <strain>ATCC BAA-1014 / DSM 16622 / JCM 12645 / Bem</strain>
    </source>
</reference>
<protein>
    <recommendedName>
        <fullName evidence="1">Adenylosuccinate synthetase</fullName>
        <shortName evidence="1">AMPSase</shortName>
        <shortName evidence="1">AdSS</shortName>
        <ecNumber evidence="1">6.3.4.4</ecNumber>
    </recommendedName>
    <alternativeName>
        <fullName evidence="1">IMP--aspartate ligase</fullName>
    </alternativeName>
</protein>
<sequence>MANVVVIGAQWGDEGKGKVVDIYTEFADNVVRYQGGNNAGHTLVVGDEKVILHLIPSGILHEGKRCVIGNGVVLDPEVFIMEITKLKANGYLKDDKMLLLSEALHIIMPYHKRIDIAREKKSGSKKIGTTGRGIGPAYEDKIGRRGIRLMDLLDEKAFTRKVKEVLEEKNLILTQLLGDQPFTFEEIYEEYMKYAETLRKYAADTSLILHQETKAGKSLLFEGAQGTLLDVDHGTYPYVTSSSTCSGGACTGSGVSPREIHEVIGISKAYATRVGSGPFPTELEDETGEQLRQAGREFGSTTGRPRRTGWYDALVARYAVRVNGLSGIAITKLDVLSGQETVKVCTAYNYKGQVLTEVPASLEIMEQCTPIYEELPGWNDDITGAKSMAELPKNARDYVARIEKLSGAPVVLVSVGPRRDETIVLRNPFELN</sequence>
<dbReference type="EC" id="6.3.4.4" evidence="1"/>
<dbReference type="EMBL" id="CP001124">
    <property type="protein sequence ID" value="ACH37581.1"/>
    <property type="molecule type" value="Genomic_DNA"/>
</dbReference>
<dbReference type="RefSeq" id="WP_012528987.1">
    <property type="nucleotide sequence ID" value="NC_011146.1"/>
</dbReference>
<dbReference type="SMR" id="B5ECF3"/>
<dbReference type="STRING" id="404380.Gbem_0552"/>
<dbReference type="KEGG" id="gbm:Gbem_0552"/>
<dbReference type="eggNOG" id="COG0104">
    <property type="taxonomic scope" value="Bacteria"/>
</dbReference>
<dbReference type="HOGENOM" id="CLU_029848_0_0_7"/>
<dbReference type="OrthoDB" id="9807553at2"/>
<dbReference type="UniPathway" id="UPA00075">
    <property type="reaction ID" value="UER00335"/>
</dbReference>
<dbReference type="Proteomes" id="UP000008825">
    <property type="component" value="Chromosome"/>
</dbReference>
<dbReference type="GO" id="GO:0005737">
    <property type="term" value="C:cytoplasm"/>
    <property type="evidence" value="ECO:0007669"/>
    <property type="project" value="UniProtKB-SubCell"/>
</dbReference>
<dbReference type="GO" id="GO:0004019">
    <property type="term" value="F:adenylosuccinate synthase activity"/>
    <property type="evidence" value="ECO:0007669"/>
    <property type="project" value="UniProtKB-UniRule"/>
</dbReference>
<dbReference type="GO" id="GO:0005525">
    <property type="term" value="F:GTP binding"/>
    <property type="evidence" value="ECO:0007669"/>
    <property type="project" value="UniProtKB-UniRule"/>
</dbReference>
<dbReference type="GO" id="GO:0000287">
    <property type="term" value="F:magnesium ion binding"/>
    <property type="evidence" value="ECO:0007669"/>
    <property type="project" value="UniProtKB-UniRule"/>
</dbReference>
<dbReference type="GO" id="GO:0044208">
    <property type="term" value="P:'de novo' AMP biosynthetic process"/>
    <property type="evidence" value="ECO:0007669"/>
    <property type="project" value="UniProtKB-UniRule"/>
</dbReference>
<dbReference type="GO" id="GO:0046040">
    <property type="term" value="P:IMP metabolic process"/>
    <property type="evidence" value="ECO:0007669"/>
    <property type="project" value="TreeGrafter"/>
</dbReference>
<dbReference type="CDD" id="cd03108">
    <property type="entry name" value="AdSS"/>
    <property type="match status" value="1"/>
</dbReference>
<dbReference type="FunFam" id="1.10.300.10:FF:000001">
    <property type="entry name" value="Adenylosuccinate synthetase"/>
    <property type="match status" value="1"/>
</dbReference>
<dbReference type="FunFam" id="3.90.170.10:FF:000001">
    <property type="entry name" value="Adenylosuccinate synthetase"/>
    <property type="match status" value="1"/>
</dbReference>
<dbReference type="Gene3D" id="3.40.440.10">
    <property type="entry name" value="Adenylosuccinate Synthetase, subunit A, domain 1"/>
    <property type="match status" value="1"/>
</dbReference>
<dbReference type="Gene3D" id="1.10.300.10">
    <property type="entry name" value="Adenylosuccinate Synthetase, subunit A, domain 2"/>
    <property type="match status" value="1"/>
</dbReference>
<dbReference type="Gene3D" id="3.90.170.10">
    <property type="entry name" value="Adenylosuccinate Synthetase, subunit A, domain 3"/>
    <property type="match status" value="1"/>
</dbReference>
<dbReference type="HAMAP" id="MF_00011">
    <property type="entry name" value="Adenylosucc_synth"/>
    <property type="match status" value="1"/>
</dbReference>
<dbReference type="InterPro" id="IPR018220">
    <property type="entry name" value="Adenylosuccin_syn_GTP-bd"/>
</dbReference>
<dbReference type="InterPro" id="IPR033128">
    <property type="entry name" value="Adenylosuccin_syn_Lys_AS"/>
</dbReference>
<dbReference type="InterPro" id="IPR042109">
    <property type="entry name" value="Adenylosuccinate_synth_dom1"/>
</dbReference>
<dbReference type="InterPro" id="IPR042110">
    <property type="entry name" value="Adenylosuccinate_synth_dom2"/>
</dbReference>
<dbReference type="InterPro" id="IPR042111">
    <property type="entry name" value="Adenylosuccinate_synth_dom3"/>
</dbReference>
<dbReference type="InterPro" id="IPR001114">
    <property type="entry name" value="Adenylosuccinate_synthetase"/>
</dbReference>
<dbReference type="InterPro" id="IPR027417">
    <property type="entry name" value="P-loop_NTPase"/>
</dbReference>
<dbReference type="NCBIfam" id="NF002223">
    <property type="entry name" value="PRK01117.1"/>
    <property type="match status" value="1"/>
</dbReference>
<dbReference type="NCBIfam" id="TIGR00184">
    <property type="entry name" value="purA"/>
    <property type="match status" value="1"/>
</dbReference>
<dbReference type="PANTHER" id="PTHR11846">
    <property type="entry name" value="ADENYLOSUCCINATE SYNTHETASE"/>
    <property type="match status" value="1"/>
</dbReference>
<dbReference type="PANTHER" id="PTHR11846:SF0">
    <property type="entry name" value="ADENYLOSUCCINATE SYNTHETASE"/>
    <property type="match status" value="1"/>
</dbReference>
<dbReference type="Pfam" id="PF00709">
    <property type="entry name" value="Adenylsucc_synt"/>
    <property type="match status" value="1"/>
</dbReference>
<dbReference type="SMART" id="SM00788">
    <property type="entry name" value="Adenylsucc_synt"/>
    <property type="match status" value="1"/>
</dbReference>
<dbReference type="SUPFAM" id="SSF52540">
    <property type="entry name" value="P-loop containing nucleoside triphosphate hydrolases"/>
    <property type="match status" value="1"/>
</dbReference>
<dbReference type="PROSITE" id="PS01266">
    <property type="entry name" value="ADENYLOSUCCIN_SYN_1"/>
    <property type="match status" value="1"/>
</dbReference>
<dbReference type="PROSITE" id="PS00513">
    <property type="entry name" value="ADENYLOSUCCIN_SYN_2"/>
    <property type="match status" value="1"/>
</dbReference>
<comment type="function">
    <text evidence="1">Plays an important role in the de novo pathway of purine nucleotide biosynthesis. Catalyzes the first committed step in the biosynthesis of AMP from IMP.</text>
</comment>
<comment type="catalytic activity">
    <reaction evidence="1">
        <text>IMP + L-aspartate + GTP = N(6)-(1,2-dicarboxyethyl)-AMP + GDP + phosphate + 2 H(+)</text>
        <dbReference type="Rhea" id="RHEA:15753"/>
        <dbReference type="ChEBI" id="CHEBI:15378"/>
        <dbReference type="ChEBI" id="CHEBI:29991"/>
        <dbReference type="ChEBI" id="CHEBI:37565"/>
        <dbReference type="ChEBI" id="CHEBI:43474"/>
        <dbReference type="ChEBI" id="CHEBI:57567"/>
        <dbReference type="ChEBI" id="CHEBI:58053"/>
        <dbReference type="ChEBI" id="CHEBI:58189"/>
        <dbReference type="EC" id="6.3.4.4"/>
    </reaction>
</comment>
<comment type="cofactor">
    <cofactor evidence="1">
        <name>Mg(2+)</name>
        <dbReference type="ChEBI" id="CHEBI:18420"/>
    </cofactor>
    <text evidence="1">Binds 1 Mg(2+) ion per subunit.</text>
</comment>
<comment type="pathway">
    <text evidence="1">Purine metabolism; AMP biosynthesis via de novo pathway; AMP from IMP: step 1/2.</text>
</comment>
<comment type="subunit">
    <text evidence="1">Homodimer.</text>
</comment>
<comment type="subcellular location">
    <subcellularLocation>
        <location evidence="1">Cytoplasm</location>
    </subcellularLocation>
</comment>
<comment type="similarity">
    <text evidence="1">Belongs to the adenylosuccinate synthetase family.</text>
</comment>
<proteinExistence type="inferred from homology"/>
<evidence type="ECO:0000255" key="1">
    <source>
        <dbReference type="HAMAP-Rule" id="MF_00011"/>
    </source>
</evidence>
<accession>B5ECF3</accession>
<gene>
    <name evidence="1" type="primary">purA</name>
    <name type="ordered locus">Gbem_0552</name>
</gene>
<keyword id="KW-0963">Cytoplasm</keyword>
<keyword id="KW-0342">GTP-binding</keyword>
<keyword id="KW-0436">Ligase</keyword>
<keyword id="KW-0460">Magnesium</keyword>
<keyword id="KW-0479">Metal-binding</keyword>
<keyword id="KW-0547">Nucleotide-binding</keyword>
<keyword id="KW-0658">Purine biosynthesis</keyword>
<keyword id="KW-1185">Reference proteome</keyword>